<comment type="function">
    <text evidence="4">Part of the tectonic-like complex which is required for tissue-specific ciliogenesis and may regulate ciliary membrane composition.</text>
</comment>
<comment type="subunit">
    <text evidence="6">Part of the tectonic-like complex (also named B9 complex). Interacts with TMEM107.</text>
</comment>
<comment type="subcellular location">
    <subcellularLocation>
        <location evidence="11">Membrane</location>
        <topology evidence="11">Multi-pass membrane protein</topology>
    </subcellularLocation>
    <subcellularLocation>
        <location evidence="4">Cytoplasm</location>
        <location evidence="4">Cytoskeleton</location>
        <location evidence="4">Cilium basal body</location>
    </subcellularLocation>
    <text>Localizes at the transition zone, a region between the basal body and the ciliary axoneme.</text>
</comment>
<comment type="alternative products">
    <event type="alternative splicing"/>
    <isoform>
        <id>Q9P0N5-1</id>
        <name>1</name>
        <sequence type="displayed"/>
    </isoform>
    <isoform>
        <id>Q9P0N5-2</id>
        <name>2</name>
        <sequence type="described" ref="VSP_040295 VSP_040296"/>
    </isoform>
    <isoform>
        <id>Q9P0N5-3</id>
        <name>3</name>
        <sequence type="described" ref="VSP_040296"/>
    </isoform>
</comment>
<comment type="disease" evidence="2 3 4 5">
    <disease id="DI-02621">
        <name>Joubert syndrome 2</name>
        <acronym>JBTS2</acronym>
        <description>A disorder presenting with cerebellar ataxia, oculomotor apraxia, hypotonia, neonatal breathing abnormalities and psychomotor delay. Neuroradiologically, it is characterized by cerebellar vermian hypoplasia/aplasia, thickened and reoriented superior cerebellar peduncles, and an abnormally large interpeduncular fossa, giving the appearance of a molar tooth on transaxial slices (molar tooth sign). Additional variable features include retinal dystrophy and renal disease.</description>
        <dbReference type="MIM" id="608091"/>
    </disease>
    <text>The disease is caused by variants affecting the gene represented in this entry.</text>
</comment>
<comment type="disease" evidence="3">
    <disease id="DI-02862">
        <name>Meckel syndrome 2</name>
        <acronym>MKS2</acronym>
        <description>A disorder characterized by a combination of renal cysts and variably associated features including developmental anomalies of the central nervous system (typically encephalocele), hepatic ductal dysplasia and cysts, and polydactyly.</description>
        <dbReference type="MIM" id="603194"/>
    </disease>
    <text>The disease is caused by variants affecting the gene represented in this entry.</text>
</comment>
<comment type="disease" evidence="7">
    <disease id="DI-06965">
        <name>Retinitis pigmentosa 98</name>
        <acronym>RP98</acronym>
        <description>An autosomal recessive form of retinitis pigmentosa, a retinal dystrophy belonging to the group of pigmentary retinopathies. Retinitis pigmentosa is characterized by retinal pigment deposits visible on fundus examination and primary loss of rod photoreceptor cells followed by secondary loss of cone photoreceptors. Patients typically have night vision blindness and loss of midperipheral visual field. RP98 is characterized by onset of night blindness in early childhood, with gradual loss of peripheral vision and later of central vision.</description>
        <dbReference type="MIM" id="620996"/>
    </disease>
    <text>The disease is caused by variants affecting the gene represented in this entry.</text>
</comment>
<comment type="miscellaneous">
    <text evidence="12">TMEM138 and TMEM216 genes are adjacent and are aligned in a head-to-tail configuration. They share some cis regulatory region and display coordinated expression. Genes were joined by chromosomal rearrangement at the amphiboan to reptile evolutionary transition around 340 million years ago (PubMed:22282472).</text>
</comment>
<dbReference type="EMBL" id="AF151078">
    <property type="protein sequence ID" value="AAF36164.1"/>
    <property type="molecule type" value="mRNA"/>
</dbReference>
<dbReference type="EMBL" id="AK303687">
    <property type="protein sequence ID" value="BAH14017.1"/>
    <property type="molecule type" value="mRNA"/>
</dbReference>
<dbReference type="EMBL" id="CR457166">
    <property type="protein sequence ID" value="CAG33447.1"/>
    <property type="molecule type" value="mRNA"/>
</dbReference>
<dbReference type="EMBL" id="AP003108">
    <property type="status" value="NOT_ANNOTATED_CDS"/>
    <property type="molecule type" value="Genomic_DNA"/>
</dbReference>
<dbReference type="EMBL" id="BC011010">
    <property type="protein sequence ID" value="AAH11010.1"/>
    <property type="molecule type" value="mRNA"/>
</dbReference>
<dbReference type="CCDS" id="CCDS53640.1">
    <molecule id="Q9P0N5-1"/>
</dbReference>
<dbReference type="CCDS" id="CCDS86205.1">
    <molecule id="Q9P0N5-3"/>
</dbReference>
<dbReference type="RefSeq" id="NP_001167461.1">
    <molecule id="Q9P0N5-1"/>
    <property type="nucleotide sequence ID" value="NM_001173990.3"/>
</dbReference>
<dbReference type="RefSeq" id="NP_001167462.1">
    <molecule id="Q9P0N5-3"/>
    <property type="nucleotide sequence ID" value="NM_001173991.3"/>
</dbReference>
<dbReference type="RefSeq" id="NP_001317214.1">
    <property type="nucleotide sequence ID" value="NM_001330285.1"/>
</dbReference>
<dbReference type="RefSeq" id="NP_057583.2">
    <molecule id="Q9P0N5-2"/>
    <property type="nucleotide sequence ID" value="NM_016499.6"/>
</dbReference>
<dbReference type="RefSeq" id="XP_005274096.1">
    <property type="nucleotide sequence ID" value="XM_005274039.3"/>
</dbReference>
<dbReference type="SMR" id="Q9P0N5"/>
<dbReference type="BioGRID" id="119415">
    <property type="interactions" value="245"/>
</dbReference>
<dbReference type="ComplexPortal" id="CPX-2531">
    <property type="entry name" value="MKS transition zone complex"/>
</dbReference>
<dbReference type="DIP" id="DIP-61992N"/>
<dbReference type="FunCoup" id="Q9P0N5">
    <property type="interactions" value="158"/>
</dbReference>
<dbReference type="IntAct" id="Q9P0N5">
    <property type="interactions" value="243"/>
</dbReference>
<dbReference type="STRING" id="9606.ENSP00000334844"/>
<dbReference type="BioMuta" id="TMEM216"/>
<dbReference type="DMDM" id="380865448"/>
<dbReference type="PaxDb" id="9606-ENSP00000440638"/>
<dbReference type="ProteomicsDB" id="83583">
    <molecule id="Q9P0N5-2"/>
</dbReference>
<dbReference type="DNASU" id="51259"/>
<dbReference type="Ensembl" id="ENST00000334888.10">
    <molecule id="Q9P0N5-3"/>
    <property type="protein sequence ID" value="ENSP00000334844.5"/>
    <property type="gene ID" value="ENSG00000187049.11"/>
</dbReference>
<dbReference type="Ensembl" id="ENST00000515837.7">
    <molecule id="Q9P0N5-1"/>
    <property type="protein sequence ID" value="ENSP00000440638.1"/>
    <property type="gene ID" value="ENSG00000187049.11"/>
</dbReference>
<dbReference type="GeneID" id="51259"/>
<dbReference type="KEGG" id="hsa:51259"/>
<dbReference type="MANE-Select" id="ENST00000515837.7">
    <property type="protein sequence ID" value="ENSP00000440638.1"/>
    <property type="RefSeq nucleotide sequence ID" value="NM_001173990.3"/>
    <property type="RefSeq protein sequence ID" value="NP_001167461.1"/>
</dbReference>
<dbReference type="UCSC" id="uc010rlj.3">
    <molecule id="Q9P0N5-1"/>
    <property type="organism name" value="human"/>
</dbReference>
<dbReference type="AGR" id="HGNC:25018"/>
<dbReference type="CTD" id="51259"/>
<dbReference type="DisGeNET" id="51259"/>
<dbReference type="GeneCards" id="TMEM216"/>
<dbReference type="GeneReviews" id="TMEM216"/>
<dbReference type="HGNC" id="HGNC:25018">
    <property type="gene designation" value="TMEM216"/>
</dbReference>
<dbReference type="HPA" id="ENSG00000187049">
    <property type="expression patterns" value="Low tissue specificity"/>
</dbReference>
<dbReference type="MalaCards" id="TMEM216"/>
<dbReference type="MIM" id="603194">
    <property type="type" value="phenotype"/>
</dbReference>
<dbReference type="MIM" id="608091">
    <property type="type" value="phenotype"/>
</dbReference>
<dbReference type="MIM" id="613277">
    <property type="type" value="gene"/>
</dbReference>
<dbReference type="MIM" id="620996">
    <property type="type" value="phenotype"/>
</dbReference>
<dbReference type="neXtProt" id="NX_Q9P0N5"/>
<dbReference type="OpenTargets" id="ENSG00000187049"/>
<dbReference type="Orphanet" id="2318">
    <property type="disease" value="Joubert syndrome with oculorenal defect"/>
</dbReference>
<dbReference type="Orphanet" id="564">
    <property type="disease" value="Meckel syndrome"/>
</dbReference>
<dbReference type="Orphanet" id="2754">
    <property type="disease" value="Orofaciodigital syndrome type 6"/>
</dbReference>
<dbReference type="Orphanet" id="791">
    <property type="disease" value="Retinitis pigmentosa"/>
</dbReference>
<dbReference type="PharmGKB" id="PA162406553"/>
<dbReference type="VEuPathDB" id="HostDB:ENSG00000187049"/>
<dbReference type="eggNOG" id="KOG4502">
    <property type="taxonomic scope" value="Eukaryota"/>
</dbReference>
<dbReference type="GeneTree" id="ENSGT00940000153899"/>
<dbReference type="HOGENOM" id="CLU_135948_0_0_1"/>
<dbReference type="InParanoid" id="Q9P0N5"/>
<dbReference type="OMA" id="AEILMFV"/>
<dbReference type="OrthoDB" id="262535at2759"/>
<dbReference type="PAN-GO" id="Q9P0N5">
    <property type="GO annotations" value="2 GO annotations based on evolutionary models"/>
</dbReference>
<dbReference type="TreeFam" id="TF323824"/>
<dbReference type="PathwayCommons" id="Q9P0N5"/>
<dbReference type="Reactome" id="R-HSA-5620912">
    <property type="pathway name" value="Anchoring of the basal body to the plasma membrane"/>
</dbReference>
<dbReference type="SignaLink" id="Q9P0N5"/>
<dbReference type="BioGRID-ORCS" id="51259">
    <property type="hits" value="22 hits in 1161 CRISPR screens"/>
</dbReference>
<dbReference type="ChiTaRS" id="TMEM216">
    <property type="organism name" value="human"/>
</dbReference>
<dbReference type="GeneWiki" id="TMEM216"/>
<dbReference type="GenomeRNAi" id="51259"/>
<dbReference type="Pharos" id="Q9P0N5">
    <property type="development level" value="Tbio"/>
</dbReference>
<dbReference type="PRO" id="PR:Q9P0N5"/>
<dbReference type="Proteomes" id="UP000005640">
    <property type="component" value="Chromosome 11"/>
</dbReference>
<dbReference type="RNAct" id="Q9P0N5">
    <property type="molecule type" value="protein"/>
</dbReference>
<dbReference type="Bgee" id="ENSG00000187049">
    <property type="expression patterns" value="Expressed in primordial germ cell in gonad and 174 other cell types or tissues"/>
</dbReference>
<dbReference type="ExpressionAtlas" id="Q9P0N5">
    <property type="expression patterns" value="baseline and differential"/>
</dbReference>
<dbReference type="GO" id="GO:0035869">
    <property type="term" value="C:ciliary transition zone"/>
    <property type="evidence" value="ECO:0000318"/>
    <property type="project" value="GO_Central"/>
</dbReference>
<dbReference type="GO" id="GO:0005929">
    <property type="term" value="C:cilium"/>
    <property type="evidence" value="ECO:0000314"/>
    <property type="project" value="UniProtKB"/>
</dbReference>
<dbReference type="GO" id="GO:0005856">
    <property type="term" value="C:cytoskeleton"/>
    <property type="evidence" value="ECO:0007669"/>
    <property type="project" value="UniProtKB-KW"/>
</dbReference>
<dbReference type="GO" id="GO:0005829">
    <property type="term" value="C:cytosol"/>
    <property type="evidence" value="ECO:0000304"/>
    <property type="project" value="Reactome"/>
</dbReference>
<dbReference type="GO" id="GO:0016020">
    <property type="term" value="C:membrane"/>
    <property type="evidence" value="ECO:0007669"/>
    <property type="project" value="UniProtKB-SubCell"/>
</dbReference>
<dbReference type="GO" id="GO:0036038">
    <property type="term" value="C:MKS complex"/>
    <property type="evidence" value="ECO:0000250"/>
    <property type="project" value="UniProtKB"/>
</dbReference>
<dbReference type="GO" id="GO:0060271">
    <property type="term" value="P:cilium assembly"/>
    <property type="evidence" value="ECO:0000315"/>
    <property type="project" value="UniProtKB"/>
</dbReference>
<dbReference type="GO" id="GO:1905515">
    <property type="term" value="P:non-motile cilium assembly"/>
    <property type="evidence" value="ECO:0000318"/>
    <property type="project" value="GO_Central"/>
</dbReference>
<dbReference type="InterPro" id="IPR019184">
    <property type="entry name" value="Uncharacterised_TM-17"/>
</dbReference>
<dbReference type="PANTHER" id="PTHR13531">
    <property type="entry name" value="GEO07735P1-RELATED-RELATED"/>
    <property type="match status" value="1"/>
</dbReference>
<dbReference type="PANTHER" id="PTHR13531:SF5">
    <property type="entry name" value="TRANSMEMBRANE PROTEIN 216"/>
    <property type="match status" value="1"/>
</dbReference>
<dbReference type="Pfam" id="PF09799">
    <property type="entry name" value="Transmemb_17"/>
    <property type="match status" value="1"/>
</dbReference>
<sequence length="145" mass="16487">MLPRGLKMAPRGKRLSSTPLEILFFLNGWYNATYFLLELFIFLYKGVLLPYPTANLVLDVVMLLLYLGIEVIRLFFGTKGNLCQRKMPLSISVALTFPSAMMASYYLLLQTYVLRLEAIMNGILLFFCGSELLLEVLTLAAFSRI</sequence>
<reference key="1">
    <citation type="journal article" date="2000" name="Genome Res.">
        <title>Cloning and functional analysis of cDNAs with open reading frames for 300 previously undefined genes expressed in CD34+ hematopoietic stem/progenitor cells.</title>
        <authorList>
            <person name="Zhang Q.-H."/>
            <person name="Ye M."/>
            <person name="Wu X.-Y."/>
            <person name="Ren S.-X."/>
            <person name="Zhao M."/>
            <person name="Zhao C.-J."/>
            <person name="Fu G."/>
            <person name="Shen Y."/>
            <person name="Fan H.-Y."/>
            <person name="Lu G."/>
            <person name="Zhong M."/>
            <person name="Xu X.-R."/>
            <person name="Han Z.-G."/>
            <person name="Zhang J.-W."/>
            <person name="Tao J."/>
            <person name="Huang Q.-H."/>
            <person name="Zhou J."/>
            <person name="Hu G.-X."/>
            <person name="Gu J."/>
            <person name="Chen S.-J."/>
            <person name="Chen Z."/>
        </authorList>
    </citation>
    <scope>NUCLEOTIDE SEQUENCE [LARGE SCALE MRNA] (ISOFORM 2)</scope>
    <source>
        <tissue>Umbilical cord blood</tissue>
    </source>
</reference>
<reference key="2">
    <citation type="journal article" date="2004" name="Nat. Genet.">
        <title>Complete sequencing and characterization of 21,243 full-length human cDNAs.</title>
        <authorList>
            <person name="Ota T."/>
            <person name="Suzuki Y."/>
            <person name="Nishikawa T."/>
            <person name="Otsuki T."/>
            <person name="Sugiyama T."/>
            <person name="Irie R."/>
            <person name="Wakamatsu A."/>
            <person name="Hayashi K."/>
            <person name="Sato H."/>
            <person name="Nagai K."/>
            <person name="Kimura K."/>
            <person name="Makita H."/>
            <person name="Sekine M."/>
            <person name="Obayashi M."/>
            <person name="Nishi T."/>
            <person name="Shibahara T."/>
            <person name="Tanaka T."/>
            <person name="Ishii S."/>
            <person name="Yamamoto J."/>
            <person name="Saito K."/>
            <person name="Kawai Y."/>
            <person name="Isono Y."/>
            <person name="Nakamura Y."/>
            <person name="Nagahari K."/>
            <person name="Murakami K."/>
            <person name="Yasuda T."/>
            <person name="Iwayanagi T."/>
            <person name="Wagatsuma M."/>
            <person name="Shiratori A."/>
            <person name="Sudo H."/>
            <person name="Hosoiri T."/>
            <person name="Kaku Y."/>
            <person name="Kodaira H."/>
            <person name="Kondo H."/>
            <person name="Sugawara M."/>
            <person name="Takahashi M."/>
            <person name="Kanda K."/>
            <person name="Yokoi T."/>
            <person name="Furuya T."/>
            <person name="Kikkawa E."/>
            <person name="Omura Y."/>
            <person name="Abe K."/>
            <person name="Kamihara K."/>
            <person name="Katsuta N."/>
            <person name="Sato K."/>
            <person name="Tanikawa M."/>
            <person name="Yamazaki M."/>
            <person name="Ninomiya K."/>
            <person name="Ishibashi T."/>
            <person name="Yamashita H."/>
            <person name="Murakawa K."/>
            <person name="Fujimori K."/>
            <person name="Tanai H."/>
            <person name="Kimata M."/>
            <person name="Watanabe M."/>
            <person name="Hiraoka S."/>
            <person name="Chiba Y."/>
            <person name="Ishida S."/>
            <person name="Ono Y."/>
            <person name="Takiguchi S."/>
            <person name="Watanabe S."/>
            <person name="Yosida M."/>
            <person name="Hotuta T."/>
            <person name="Kusano J."/>
            <person name="Kanehori K."/>
            <person name="Takahashi-Fujii A."/>
            <person name="Hara H."/>
            <person name="Tanase T.-O."/>
            <person name="Nomura Y."/>
            <person name="Togiya S."/>
            <person name="Komai F."/>
            <person name="Hara R."/>
            <person name="Takeuchi K."/>
            <person name="Arita M."/>
            <person name="Imose N."/>
            <person name="Musashino K."/>
            <person name="Yuuki H."/>
            <person name="Oshima A."/>
            <person name="Sasaki N."/>
            <person name="Aotsuka S."/>
            <person name="Yoshikawa Y."/>
            <person name="Matsunawa H."/>
            <person name="Ichihara T."/>
            <person name="Shiohata N."/>
            <person name="Sano S."/>
            <person name="Moriya S."/>
            <person name="Momiyama H."/>
            <person name="Satoh N."/>
            <person name="Takami S."/>
            <person name="Terashima Y."/>
            <person name="Suzuki O."/>
            <person name="Nakagawa S."/>
            <person name="Senoh A."/>
            <person name="Mizoguchi H."/>
            <person name="Goto Y."/>
            <person name="Shimizu F."/>
            <person name="Wakebe H."/>
            <person name="Hishigaki H."/>
            <person name="Watanabe T."/>
            <person name="Sugiyama A."/>
            <person name="Takemoto M."/>
            <person name="Kawakami B."/>
            <person name="Yamazaki M."/>
            <person name="Watanabe K."/>
            <person name="Kumagai A."/>
            <person name="Itakura S."/>
            <person name="Fukuzumi Y."/>
            <person name="Fujimori Y."/>
            <person name="Komiyama M."/>
            <person name="Tashiro H."/>
            <person name="Tanigami A."/>
            <person name="Fujiwara T."/>
            <person name="Ono T."/>
            <person name="Yamada K."/>
            <person name="Fujii Y."/>
            <person name="Ozaki K."/>
            <person name="Hirao M."/>
            <person name="Ohmori Y."/>
            <person name="Kawabata A."/>
            <person name="Hikiji T."/>
            <person name="Kobatake N."/>
            <person name="Inagaki H."/>
            <person name="Ikema Y."/>
            <person name="Okamoto S."/>
            <person name="Okitani R."/>
            <person name="Kawakami T."/>
            <person name="Noguchi S."/>
            <person name="Itoh T."/>
            <person name="Shigeta K."/>
            <person name="Senba T."/>
            <person name="Matsumura K."/>
            <person name="Nakajima Y."/>
            <person name="Mizuno T."/>
            <person name="Morinaga M."/>
            <person name="Sasaki M."/>
            <person name="Togashi T."/>
            <person name="Oyama M."/>
            <person name="Hata H."/>
            <person name="Watanabe M."/>
            <person name="Komatsu T."/>
            <person name="Mizushima-Sugano J."/>
            <person name="Satoh T."/>
            <person name="Shirai Y."/>
            <person name="Takahashi Y."/>
            <person name="Nakagawa K."/>
            <person name="Okumura K."/>
            <person name="Nagase T."/>
            <person name="Nomura N."/>
            <person name="Kikuchi H."/>
            <person name="Masuho Y."/>
            <person name="Yamashita R."/>
            <person name="Nakai K."/>
            <person name="Yada T."/>
            <person name="Nakamura Y."/>
            <person name="Ohara O."/>
            <person name="Isogai T."/>
            <person name="Sugano S."/>
        </authorList>
    </citation>
    <scope>NUCLEOTIDE SEQUENCE [LARGE SCALE MRNA] (ISOFORM 1)</scope>
    <source>
        <tissue>Kidney</tissue>
    </source>
</reference>
<reference key="3">
    <citation type="submission" date="2004-06" db="EMBL/GenBank/DDBJ databases">
        <title>Cloning of human full open reading frames in Gateway(TM) system entry vector (pDONR201).</title>
        <authorList>
            <person name="Ebert L."/>
            <person name="Schick M."/>
            <person name="Neubert P."/>
            <person name="Schatten R."/>
            <person name="Henze S."/>
            <person name="Korn B."/>
        </authorList>
    </citation>
    <scope>NUCLEOTIDE SEQUENCE [LARGE SCALE MRNA] (ISOFORM 2)</scope>
</reference>
<reference key="4">
    <citation type="journal article" date="2006" name="Nature">
        <title>Human chromosome 11 DNA sequence and analysis including novel gene identification.</title>
        <authorList>
            <person name="Taylor T.D."/>
            <person name="Noguchi H."/>
            <person name="Totoki Y."/>
            <person name="Toyoda A."/>
            <person name="Kuroki Y."/>
            <person name="Dewar K."/>
            <person name="Lloyd C."/>
            <person name="Itoh T."/>
            <person name="Takeda T."/>
            <person name="Kim D.-W."/>
            <person name="She X."/>
            <person name="Barlow K.F."/>
            <person name="Bloom T."/>
            <person name="Bruford E."/>
            <person name="Chang J.L."/>
            <person name="Cuomo C.A."/>
            <person name="Eichler E."/>
            <person name="FitzGerald M.G."/>
            <person name="Jaffe D.B."/>
            <person name="LaButti K."/>
            <person name="Nicol R."/>
            <person name="Park H.-S."/>
            <person name="Seaman C."/>
            <person name="Sougnez C."/>
            <person name="Yang X."/>
            <person name="Zimmer A.R."/>
            <person name="Zody M.C."/>
            <person name="Birren B.W."/>
            <person name="Nusbaum C."/>
            <person name="Fujiyama A."/>
            <person name="Hattori M."/>
            <person name="Rogers J."/>
            <person name="Lander E.S."/>
            <person name="Sakaki Y."/>
        </authorList>
    </citation>
    <scope>NUCLEOTIDE SEQUENCE [LARGE SCALE GENOMIC DNA]</scope>
</reference>
<reference key="5">
    <citation type="journal article" date="2004" name="Genome Res.">
        <title>The status, quality, and expansion of the NIH full-length cDNA project: the Mammalian Gene Collection (MGC).</title>
        <authorList>
            <consortium name="The MGC Project Team"/>
        </authorList>
    </citation>
    <scope>NUCLEOTIDE SEQUENCE [LARGE SCALE MRNA] (ISOFORM 2)</scope>
    <source>
        <tissue>Brain</tissue>
    </source>
</reference>
<reference key="6">
    <citation type="journal article" date="2016" name="Nat. Cell Biol.">
        <title>TMEM107 recruits ciliopathy proteins to subdomains of the ciliary transition zone and causes Joubert syndrome.</title>
        <authorList>
            <person name="Lambacher N.J."/>
            <person name="Bruel A.L."/>
            <person name="van Dam T.J."/>
            <person name="Szymanska K."/>
            <person name="Slaats G.G."/>
            <person name="Kuhns S."/>
            <person name="McManus G.J."/>
            <person name="Kennedy J.E."/>
            <person name="Gaff K."/>
            <person name="Wu K.M."/>
            <person name="van der Lee R."/>
            <person name="Burglen L."/>
            <person name="Doummar D."/>
            <person name="Riviere J.B."/>
            <person name="Faivre L."/>
            <person name="Attie-Bitach T."/>
            <person name="Saunier S."/>
            <person name="Curd A."/>
            <person name="Peckham M."/>
            <person name="Giles R.H."/>
            <person name="Johnson C.A."/>
            <person name="Huynen M.A."/>
            <person name="Thauvin-Robinet C."/>
            <person name="Blacque O.E."/>
        </authorList>
    </citation>
    <scope>IDENTIFICATION IN THE TECTONIC-LIKE COMPLEX</scope>
    <scope>INTERACTION WITH TMEM107</scope>
</reference>
<reference key="7">
    <citation type="journal article" date="2010" name="Am. J. Hum. Genet.">
        <title>Joubert syndrome 2 (JBTS2) in Ashkenazi Jews is associated with a TMEM216 mutation.</title>
        <authorList>
            <person name="Edvardson S."/>
            <person name="Shaag A."/>
            <person name="Zenvirt S."/>
            <person name="Erlich Y."/>
            <person name="Hannon G.J."/>
            <person name="Shanske A.L."/>
            <person name="Gomori J.M."/>
            <person name="Ekstein J."/>
            <person name="Elpeleg O."/>
        </authorList>
    </citation>
    <scope>VARIANT JBTS2 LEU-73</scope>
</reference>
<reference key="8">
    <citation type="journal article" date="2010" name="Nat. Genet.">
        <title>Mutations in TMEM216 perturb ciliogenesis and cause Joubert, Meckel and related syndromes.</title>
        <authorList>
            <person name="Valente E.M."/>
            <person name="Logan C.V."/>
            <person name="Mougou-Zerelli S."/>
            <person name="Lee J.H."/>
            <person name="Silhavy J.L."/>
            <person name="Brancati F."/>
            <person name="Iannicelli M."/>
            <person name="Travaglini L."/>
            <person name="Romani S."/>
            <person name="Illi B."/>
            <person name="Adams M."/>
            <person name="Szymanska K."/>
            <person name="Mazzotta A."/>
            <person name="Lee J.E."/>
            <person name="Tolentino J.C."/>
            <person name="Swistun D."/>
            <person name="Salpietro C.D."/>
            <person name="Fede C."/>
            <person name="Gabriel S."/>
            <person name="Russ C."/>
            <person name="Cibulskis K."/>
            <person name="Sougnez C."/>
            <person name="Hildebrandt F."/>
            <person name="Otto E.A."/>
            <person name="Held S."/>
            <person name="Diplas B.H."/>
            <person name="Davis E.E."/>
            <person name="Mikula M."/>
            <person name="Strom C.M."/>
            <person name="Ben-Zeev B."/>
            <person name="Lev D."/>
            <person name="Sagie T.L."/>
            <person name="Michelson M."/>
            <person name="Yaron Y."/>
            <person name="Krause A."/>
            <person name="Boltshauser E."/>
            <person name="Elkhartoufi N."/>
            <person name="Roume J."/>
            <person name="Shalev S."/>
            <person name="Munnich A."/>
            <person name="Saunier S."/>
            <person name="Inglehearn C."/>
            <person name="Saad A."/>
            <person name="Alkindy A."/>
            <person name="Thomas S."/>
            <person name="Vekemans M."/>
            <person name="Dallapiccola B."/>
            <person name="Katsanis N."/>
            <person name="Johnson C.A."/>
            <person name="Attie-Bitach T."/>
            <person name="Gleeson J.G."/>
        </authorList>
    </citation>
    <scope>VARIANTS MKS2 HIS-73; ALA-77 AND ARG-114</scope>
    <scope>VARIANTS JBTS2 CYS-73; HIS-73 AND LEU-73</scope>
</reference>
<reference key="9">
    <citation type="journal article" date="2012" name="Am. J. Hum. Genet.">
        <title>Mutations in C5ORF42 cause Joubert syndrome in the French Canadian population.</title>
        <authorList>
            <person name="Srour M."/>
            <person name="Schwartzentruber J."/>
            <person name="Hamdan F.F."/>
            <person name="Ospina L.H."/>
            <person name="Patry L."/>
            <person name="Labuda D."/>
            <person name="Massicotte C."/>
            <person name="Dobrzeniecka S."/>
            <person name="Capo-Chichi J.M."/>
            <person name="Papillon-Cavanagh S."/>
            <person name="Samuels M.E."/>
            <person name="Boycott K.M."/>
            <person name="Shevell M.I."/>
            <person name="Laframboise R."/>
            <person name="Desilets V."/>
            <person name="Maranda B."/>
            <person name="Rouleau G.A."/>
            <person name="Majewski J."/>
            <person name="Michaud J.L."/>
        </authorList>
    </citation>
    <scope>VARIANT JBTS2 PHE-89</scope>
</reference>
<reference key="10">
    <citation type="journal article" date="2012" name="Science">
        <title>Evolutionarily assembled cis-regulatory module at a human ciliopathy locus.</title>
        <authorList>
            <person name="Lee J.H."/>
            <person name="Silhavy J.L."/>
            <person name="Lee J.E."/>
            <person name="Al-Gazali L."/>
            <person name="Thomas S."/>
            <person name="Davis E.E."/>
            <person name="Bielas S.L."/>
            <person name="Hill K.J."/>
            <person name="Iannicelli M."/>
            <person name="Brancati F."/>
            <person name="Gabriel S.B."/>
            <person name="Russ C."/>
            <person name="Logan C.V."/>
            <person name="Sharif S.M."/>
            <person name="Bennett C.P."/>
            <person name="Abe M."/>
            <person name="Hildebrandt F."/>
            <person name="Diplas B.H."/>
            <person name="Attie-Bitach T."/>
            <person name="Katsanis N."/>
            <person name="Rajab A."/>
            <person name="Koul R."/>
            <person name="Sztriha L."/>
            <person name="Waters E.R."/>
            <person name="Ferro-Novick S."/>
            <person name="Woods G.C."/>
            <person name="Johnson C.A."/>
            <person name="Valente E.M."/>
            <person name="Zaki M.S."/>
            <person name="Gleeson J.G."/>
        </authorList>
    </citation>
    <scope>VARIANTS JBTS2 CYS-73; HIS-73 AND LEU-73</scope>
    <scope>FUNCTION</scope>
    <scope>SUBCELLULAR LOCATION</scope>
</reference>
<reference key="11">
    <citation type="journal article" date="2024" name="Am. J. Hum. Genet.">
        <title>Substitution of a single non-coding nucleotide upstream of TMEM216 causes non-syndromic retinitis pigmentosa and is associated with reduced TMEM216 expression.</title>
        <authorList>
            <person name="Malka S."/>
            <person name="Biswas P."/>
            <person name="Berry A.M."/>
            <person name="Sangermano R."/>
            <person name="Ullah M."/>
            <person name="Lin S."/>
            <person name="D'Antonio M."/>
            <person name="Jestin A."/>
            <person name="Jiao X."/>
            <person name="Quinodoz M."/>
            <person name="Sullivan L."/>
            <person name="Gardner J.C."/>
            <person name="Place E.M."/>
            <person name="Michaelides M."/>
            <person name="Kaminska K."/>
            <person name="Mahroo O.A."/>
            <person name="Schiff E."/>
            <person name="Wright G."/>
            <person name="Cancellieri F."/>
            <person name="Vaclavik V."/>
            <person name="Santos C."/>
            <person name="Rehman A.U."/>
            <person name="Mehrotra S."/>
            <person name="Azhar Baig H.M."/>
            <person name="Iqbal M."/>
            <person name="Ansar M."/>
            <person name="Santos L.C."/>
            <person name="Sousa A.B."/>
            <person name="Tran V.H."/>
            <person name="Matsui H."/>
            <person name="Bhatia A."/>
            <person name="Naeem M.A."/>
            <person name="Akram S.J."/>
            <person name="Akram J."/>
            <person name="Riazuddin S."/>
            <person name="Ayuso C."/>
            <person name="Pierce E.A."/>
            <person name="Hardcastle A.J."/>
            <person name="Riazuddin S.A."/>
            <person name="Frazer K.A."/>
            <person name="Hejtmancik J.F."/>
            <person name="Rivolta C."/>
            <person name="Bujakowska K.M."/>
            <person name="Arno G."/>
            <person name="Webster A.R."/>
            <person name="Ayyagari R."/>
        </authorList>
    </citation>
    <scope>INVOLVEMENT IN RP98</scope>
</reference>
<organism>
    <name type="scientific">Homo sapiens</name>
    <name type="common">Human</name>
    <dbReference type="NCBI Taxonomy" id="9606"/>
    <lineage>
        <taxon>Eukaryota</taxon>
        <taxon>Metazoa</taxon>
        <taxon>Chordata</taxon>
        <taxon>Craniata</taxon>
        <taxon>Vertebrata</taxon>
        <taxon>Euteleostomi</taxon>
        <taxon>Mammalia</taxon>
        <taxon>Eutheria</taxon>
        <taxon>Euarchontoglires</taxon>
        <taxon>Primates</taxon>
        <taxon>Haplorrhini</taxon>
        <taxon>Catarrhini</taxon>
        <taxon>Hominidae</taxon>
        <taxon>Homo</taxon>
    </lineage>
</organism>
<accession>Q9P0N5</accession>
<accession>A8MZ23</accession>
<accession>B7Z8N1</accession>
<keyword id="KW-0025">Alternative splicing</keyword>
<keyword id="KW-0966">Cell projection</keyword>
<keyword id="KW-1186">Ciliopathy</keyword>
<keyword id="KW-0970">Cilium biogenesis/degradation</keyword>
<keyword id="KW-0963">Cytoplasm</keyword>
<keyword id="KW-0206">Cytoskeleton</keyword>
<keyword id="KW-0225">Disease variant</keyword>
<keyword id="KW-0979">Joubert syndrome</keyword>
<keyword id="KW-0981">Meckel syndrome</keyword>
<keyword id="KW-0472">Membrane</keyword>
<keyword id="KW-1185">Reference proteome</keyword>
<keyword id="KW-0682">Retinitis pigmentosa</keyword>
<keyword id="KW-0812">Transmembrane</keyword>
<keyword id="KW-1133">Transmembrane helix</keyword>
<evidence type="ECO:0000255" key="1"/>
<evidence type="ECO:0000269" key="2">
    <source>
    </source>
</evidence>
<evidence type="ECO:0000269" key="3">
    <source>
    </source>
</evidence>
<evidence type="ECO:0000269" key="4">
    <source>
    </source>
</evidence>
<evidence type="ECO:0000269" key="5">
    <source>
    </source>
</evidence>
<evidence type="ECO:0000269" key="6">
    <source>
    </source>
</evidence>
<evidence type="ECO:0000269" key="7">
    <source>
    </source>
</evidence>
<evidence type="ECO:0000303" key="8">
    <source>
    </source>
</evidence>
<evidence type="ECO:0000303" key="9">
    <source>
    </source>
</evidence>
<evidence type="ECO:0000303" key="10">
    <source ref="3"/>
</evidence>
<evidence type="ECO:0000305" key="11"/>
<evidence type="ECO:0000305" key="12">
    <source>
    </source>
</evidence>
<proteinExistence type="evidence at protein level"/>
<protein>
    <recommendedName>
        <fullName>Transmembrane protein 216</fullName>
    </recommendedName>
</protein>
<name>TM216_HUMAN</name>
<feature type="chain" id="PRO_0000318955" description="Transmembrane protein 216">
    <location>
        <begin position="1"/>
        <end position="145"/>
    </location>
</feature>
<feature type="transmembrane region" description="Helical" evidence="1">
    <location>
        <begin position="22"/>
        <end position="42"/>
    </location>
</feature>
<feature type="transmembrane region" description="Helical" evidence="1">
    <location>
        <begin position="56"/>
        <end position="76"/>
    </location>
</feature>
<feature type="transmembrane region" description="Helical" evidence="1">
    <location>
        <begin position="89"/>
        <end position="109"/>
    </location>
</feature>
<feature type="transmembrane region" description="Helical" evidence="1">
    <location>
        <begin position="122"/>
        <end position="142"/>
    </location>
</feature>
<feature type="splice variant" id="VSP_040295" description="In isoform 2." evidence="8 9 10">
    <location>
        <begin position="1"/>
        <end position="61"/>
    </location>
</feature>
<feature type="splice variant" id="VSP_040296" description="In isoform 2 and isoform 3." evidence="8 9 10">
    <original>RI</original>
    <variation>SMDRI</variation>
    <location>
        <begin position="144"/>
        <end position="145"/>
    </location>
</feature>
<feature type="sequence variant" id="VAR_064028" description="In JBTS2; dbSNP:rs779526456." evidence="3 4">
    <original>R</original>
    <variation>C</variation>
    <location>
        <position position="73"/>
    </location>
</feature>
<feature type="sequence variant" id="VAR_064029" description="In JBTS2 and MKS2; dbSNP:rs201108965." evidence="3 4">
    <original>R</original>
    <variation>H</variation>
    <location>
        <position position="73"/>
    </location>
</feature>
<feature type="sequence variant" id="VAR_063388" description="In JBTS2; dbSNP:rs201108965." evidence="2 3 4">
    <original>R</original>
    <variation>L</variation>
    <location>
        <position position="73"/>
    </location>
</feature>
<feature type="sequence variant" id="VAR_064030" description="In MKS2; dbSNP:rs386833830." evidence="3">
    <original>G</original>
    <variation>A</variation>
    <location>
        <position position="77"/>
    </location>
</feature>
<feature type="sequence variant" id="VAR_068170" description="In JBTS2; dbSNP:rs780098806." evidence="5">
    <original>L</original>
    <variation>F</variation>
    <location>
        <position position="89"/>
    </location>
</feature>
<feature type="sequence variant" id="VAR_064031" description="In MKS2; dbSNP:rs386833831." evidence="3">
    <original>L</original>
    <variation>R</variation>
    <location>
        <position position="114"/>
    </location>
</feature>
<feature type="sequence conflict" description="In Ref. 1; AAF36164, 3; CAG33447 and 5; AAH11010." evidence="11" ref="1 3 5">
    <original>R</original>
    <variation>T</variation>
    <location sequence="Q9P0N5-2">
        <position position="86"/>
    </location>
</feature>
<feature type="sequence conflict" description="In Ref. 1; AAF36164, 3; CAG33447 and 5; AAH11010." evidence="11" ref="1 3 5">
    <original>R</original>
    <variation>T</variation>
    <location sequence="Q9P0N5-3">
        <position position="147"/>
    </location>
</feature>
<gene>
    <name type="primary">TMEM216</name>
    <name type="ORF">HSPC244</name>
</gene>